<feature type="chain" id="PRO_0000422701" description="Doublesex and mab-3 related transcription factor 3">
    <location>
        <begin position="1"/>
        <end position="474"/>
    </location>
</feature>
<feature type="domain" description="DMA" evidence="2">
    <location>
        <begin position="251"/>
        <end position="286"/>
    </location>
</feature>
<feature type="DNA-binding region" description="DM" evidence="3">
    <location>
        <begin position="29"/>
        <end position="76"/>
    </location>
</feature>
<feature type="region of interest" description="Disordered" evidence="4">
    <location>
        <begin position="89"/>
        <end position="130"/>
    </location>
</feature>
<feature type="region of interest" description="Disordered" evidence="4">
    <location>
        <begin position="157"/>
        <end position="228"/>
    </location>
</feature>
<feature type="region of interest" description="Disordered" evidence="4">
    <location>
        <begin position="415"/>
        <end position="474"/>
    </location>
</feature>
<feature type="compositionally biased region" description="Pro residues" evidence="4">
    <location>
        <begin position="108"/>
        <end position="124"/>
    </location>
</feature>
<feature type="compositionally biased region" description="Basic and acidic residues" evidence="4">
    <location>
        <begin position="172"/>
        <end position="181"/>
    </location>
</feature>
<feature type="compositionally biased region" description="Basic and acidic residues" evidence="4">
    <location>
        <begin position="218"/>
        <end position="228"/>
    </location>
</feature>
<feature type="compositionally biased region" description="Low complexity" evidence="4">
    <location>
        <begin position="415"/>
        <end position="428"/>
    </location>
</feature>
<dbReference type="EMBL" id="JQ922365">
    <property type="protein sequence ID" value="AFK83802.1"/>
    <property type="molecule type" value="Genomic_DNA"/>
</dbReference>
<dbReference type="EMBL" id="JQ922367">
    <property type="protein sequence ID" value="AFK83804.1"/>
    <property type="molecule type" value="Genomic_DNA"/>
</dbReference>
<dbReference type="EMBL" id="JQ922371">
    <property type="protein sequence ID" value="AFK83806.1"/>
    <property type="molecule type" value="mRNA"/>
</dbReference>
<dbReference type="RefSeq" id="NP_001304194.1">
    <property type="nucleotide sequence ID" value="NM_001317265.1"/>
</dbReference>
<dbReference type="SMR" id="F6W2R2"/>
<dbReference type="FunCoup" id="F6W2R2">
    <property type="interactions" value="14"/>
</dbReference>
<dbReference type="Ensembl" id="ENSECAT00000025062.2">
    <property type="protein sequence ID" value="ENSECAP00000020841.2"/>
    <property type="gene ID" value="ENSECAG00000023412.4"/>
</dbReference>
<dbReference type="GeneID" id="100147177"/>
<dbReference type="KEGG" id="ecb:100147177"/>
<dbReference type="CTD" id="58524"/>
<dbReference type="GeneTree" id="ENSGT00940000160420"/>
<dbReference type="HOGENOM" id="CLU_052449_0_0_1"/>
<dbReference type="InParanoid" id="F6W2R2"/>
<dbReference type="OrthoDB" id="5842031at2759"/>
<dbReference type="Proteomes" id="UP000002281">
    <property type="component" value="Chromosome 23"/>
</dbReference>
<dbReference type="Bgee" id="ENSECAG00000023412">
    <property type="expression patterns" value="Expressed in testis and 2 other cell types or tissues"/>
</dbReference>
<dbReference type="GO" id="GO:0005634">
    <property type="term" value="C:nucleus"/>
    <property type="evidence" value="ECO:0000315"/>
    <property type="project" value="AgBase"/>
</dbReference>
<dbReference type="GO" id="GO:0003677">
    <property type="term" value="F:DNA binding"/>
    <property type="evidence" value="ECO:0000315"/>
    <property type="project" value="AgBase"/>
</dbReference>
<dbReference type="GO" id="GO:0000981">
    <property type="term" value="F:DNA-binding transcription factor activity, RNA polymerase II-specific"/>
    <property type="evidence" value="ECO:0000318"/>
    <property type="project" value="GO_Central"/>
</dbReference>
<dbReference type="GO" id="GO:0046872">
    <property type="term" value="F:metal ion binding"/>
    <property type="evidence" value="ECO:0007669"/>
    <property type="project" value="UniProtKB-KW"/>
</dbReference>
<dbReference type="GO" id="GO:0000978">
    <property type="term" value="F:RNA polymerase II cis-regulatory region sequence-specific DNA binding"/>
    <property type="evidence" value="ECO:0000318"/>
    <property type="project" value="GO_Central"/>
</dbReference>
<dbReference type="GO" id="GO:0008344">
    <property type="term" value="P:adult locomotory behavior"/>
    <property type="evidence" value="ECO:0000315"/>
    <property type="project" value="AgBase"/>
</dbReference>
<dbReference type="GO" id="GO:0007628">
    <property type="term" value="P:adult walking behavior"/>
    <property type="evidence" value="ECO:0007669"/>
    <property type="project" value="Ensembl"/>
</dbReference>
<dbReference type="GO" id="GO:0046661">
    <property type="term" value="P:male sex differentiation"/>
    <property type="evidence" value="ECO:0000318"/>
    <property type="project" value="GO_Central"/>
</dbReference>
<dbReference type="GO" id="GO:0042487">
    <property type="term" value="P:regulation of odontogenesis of dentin-containing tooth"/>
    <property type="evidence" value="ECO:0007669"/>
    <property type="project" value="Ensembl"/>
</dbReference>
<dbReference type="GO" id="GO:0006357">
    <property type="term" value="P:regulation of transcription by RNA polymerase II"/>
    <property type="evidence" value="ECO:0000318"/>
    <property type="project" value="GO_Central"/>
</dbReference>
<dbReference type="GO" id="GO:0019226">
    <property type="term" value="P:transmission of nerve impulse"/>
    <property type="evidence" value="ECO:0000250"/>
    <property type="project" value="AgBase"/>
</dbReference>
<dbReference type="GO" id="GO:0021521">
    <property type="term" value="P:ventral spinal cord interneuron specification"/>
    <property type="evidence" value="ECO:0000250"/>
    <property type="project" value="AgBase"/>
</dbReference>
<dbReference type="FunFam" id="4.10.1040.10:FF:000001">
    <property type="entry name" value="doublesex- and mab-3-related transcription factor 1"/>
    <property type="match status" value="1"/>
</dbReference>
<dbReference type="Gene3D" id="4.10.1040.10">
    <property type="entry name" value="DM DNA-binding domain"/>
    <property type="match status" value="1"/>
</dbReference>
<dbReference type="InterPro" id="IPR001275">
    <property type="entry name" value="DM_DNA-bd"/>
</dbReference>
<dbReference type="InterPro" id="IPR036407">
    <property type="entry name" value="DM_DNA-bd_sf"/>
</dbReference>
<dbReference type="InterPro" id="IPR005173">
    <property type="entry name" value="DMA"/>
</dbReference>
<dbReference type="InterPro" id="IPR026607">
    <property type="entry name" value="DMRT"/>
</dbReference>
<dbReference type="InterPro" id="IPR009060">
    <property type="entry name" value="UBA-like_sf"/>
</dbReference>
<dbReference type="PANTHER" id="PTHR12322">
    <property type="entry name" value="DOUBLESEX AND MAB-3 RELATED TRANSCRIPTION FACTOR DMRT"/>
    <property type="match status" value="1"/>
</dbReference>
<dbReference type="PANTHER" id="PTHR12322:SF120">
    <property type="entry name" value="DOUBLESEX- AND MAB-3-RELATED TRANSCRIPTION FACTOR 3"/>
    <property type="match status" value="1"/>
</dbReference>
<dbReference type="Pfam" id="PF00751">
    <property type="entry name" value="DM"/>
    <property type="match status" value="1"/>
</dbReference>
<dbReference type="Pfam" id="PF03474">
    <property type="entry name" value="DMA"/>
    <property type="match status" value="1"/>
</dbReference>
<dbReference type="SMART" id="SM00301">
    <property type="entry name" value="DM"/>
    <property type="match status" value="1"/>
</dbReference>
<dbReference type="SUPFAM" id="SSF82927">
    <property type="entry name" value="Cysteine-rich DNA binding domain, (DM domain)"/>
    <property type="match status" value="1"/>
</dbReference>
<dbReference type="SUPFAM" id="SSF46934">
    <property type="entry name" value="UBA-like"/>
    <property type="match status" value="1"/>
</dbReference>
<dbReference type="PROSITE" id="PS40000">
    <property type="entry name" value="DM_1"/>
    <property type="match status" value="1"/>
</dbReference>
<dbReference type="PROSITE" id="PS50809">
    <property type="entry name" value="DM_2"/>
    <property type="match status" value="1"/>
</dbReference>
<sequence>MNGYGSPYLYMGGPVSQPPRAPLQRTPKCARCRNHGVLSWLKGHKRYCRFKDCTCEKCILIIERQRVMAAQVALRRQQANESLESLIPDSLRALPGPPPPGDAAAAAPQPPPTSQPSQPPPPQRPAAELAAAAALRWATEPQPGALQAQLAKPDLTEERLGDGSSADNTETFSDKDTDQRSSPDVVKSKGCFTPESPEVVSVDEGGYAVQKNGGTSESRPDSPKYHGEQNHLLIEGPSGTVSLPFSLKANRPPLEVLKKIFPNQKPTVLELILKGCGGDLVSAVEVLLSSRSSASAADRTSAEPESLVLPSNGHIFEHTLSSYPISSSKWSVGSAFRVPDTLRFSADSSNVVPNPLAVPLQHPFPQPPRYPLMLRNTLARNQSSPFLPNDVTLWNTMTLQQQYQLRSQYVSPFPGSSPSVFRSSPVLPTRAPEDPRISIPDDGCPIVSKQSLYTEDDYDERSDSSDSRILNTSS</sequence>
<name>DMRT3_HORSE</name>
<reference key="1">
    <citation type="journal article" date="2012" name="Nature">
        <title>Mutations in DMRT3 affect locomotion in horses and spinal circuit function in mice.</title>
        <authorList>
            <person name="Andersson L.S."/>
            <person name="Larhammar M."/>
            <person name="Memic F."/>
            <person name="Wootz H."/>
            <person name="Schwochow D."/>
            <person name="Rubin C.-J."/>
            <person name="Patra K."/>
            <person name="Arnason T."/>
            <person name="Wellbring L."/>
            <person name="Hjalm G."/>
            <person name="Imsland F."/>
            <person name="Petersen J.L."/>
            <person name="McCue M.E."/>
            <person name="Mickelson J.R."/>
            <person name="Cothran G."/>
            <person name="Ahituv N."/>
            <person name="Roepstorff L."/>
            <person name="Mikko S."/>
            <person name="Vallstedt A."/>
            <person name="Lindgren G."/>
            <person name="Andersson L."/>
            <person name="Kullander K."/>
        </authorList>
    </citation>
    <scope>NUCLEOTIDE SEQUENCE [GENOMIC DNA / MRNA]</scope>
    <scope>FUNCTION</scope>
    <scope>TISSUE SPECIFICITY</scope>
    <scope>POLYMORPHISM</scope>
    <source>
        <strain>Thoroughbred</strain>
    </source>
</reference>
<reference key="2">
    <citation type="journal article" date="2009" name="Science">
        <title>Genome sequence, comparative analysis, and population genetics of the domestic horse.</title>
        <authorList>
            <person name="Wade C.M."/>
            <person name="Giulotto E."/>
            <person name="Sigurdsson S."/>
            <person name="Zoli M."/>
            <person name="Gnerre S."/>
            <person name="Imsland F."/>
            <person name="Lear T.L."/>
            <person name="Adelson D.L."/>
            <person name="Bailey E."/>
            <person name="Bellone R.R."/>
            <person name="Bloecker H."/>
            <person name="Distl O."/>
            <person name="Edgar R.C."/>
            <person name="Garber M."/>
            <person name="Leeb T."/>
            <person name="Mauceli E."/>
            <person name="MacLeod J.N."/>
            <person name="Penedo M.C.T."/>
            <person name="Raison J.M."/>
            <person name="Sharpe T."/>
            <person name="Vogel J."/>
            <person name="Andersson L."/>
            <person name="Antczak D.F."/>
            <person name="Biagi T."/>
            <person name="Binns M.M."/>
            <person name="Chowdhary B.P."/>
            <person name="Coleman S.J."/>
            <person name="Della Valle G."/>
            <person name="Fryc S."/>
            <person name="Guerin G."/>
            <person name="Hasegawa T."/>
            <person name="Hill E.W."/>
            <person name="Jurka J."/>
            <person name="Kiialainen A."/>
            <person name="Lindgren G."/>
            <person name="Liu J."/>
            <person name="Magnani E."/>
            <person name="Mickelson J.R."/>
            <person name="Murray J."/>
            <person name="Nergadze S.G."/>
            <person name="Onofrio R."/>
            <person name="Pedroni S."/>
            <person name="Piras M.F."/>
            <person name="Raudsepp T."/>
            <person name="Rocchi M."/>
            <person name="Roeed K.H."/>
            <person name="Ryder O.A."/>
            <person name="Searle S."/>
            <person name="Skow L."/>
            <person name="Swinburne J.E."/>
            <person name="Syvaenen A.C."/>
            <person name="Tozaki T."/>
            <person name="Valberg S.J."/>
            <person name="Vaudin M."/>
            <person name="White J.R."/>
            <person name="Zody M.C."/>
            <person name="Lander E.S."/>
            <person name="Lindblad-Toh K."/>
        </authorList>
    </citation>
    <scope>NUCLEOTIDE SEQUENCE [LARGE SCALE GENOMIC DNA]</scope>
    <source>
        <strain>Thoroughbred</strain>
    </source>
</reference>
<organism>
    <name type="scientific">Equus caballus</name>
    <name type="common">Horse</name>
    <dbReference type="NCBI Taxonomy" id="9796"/>
    <lineage>
        <taxon>Eukaryota</taxon>
        <taxon>Metazoa</taxon>
        <taxon>Chordata</taxon>
        <taxon>Craniata</taxon>
        <taxon>Vertebrata</taxon>
        <taxon>Euteleostomi</taxon>
        <taxon>Mammalia</taxon>
        <taxon>Eutheria</taxon>
        <taxon>Laurasiatheria</taxon>
        <taxon>Perissodactyla</taxon>
        <taxon>Equidae</taxon>
        <taxon>Equus</taxon>
    </lineage>
</organism>
<protein>
    <recommendedName>
        <fullName>Doublesex and mab-3 related transcription factor 3</fullName>
    </recommendedName>
</protein>
<accession>F6W2R2</accession>
<accession>J3SGP7</accession>
<gene>
    <name type="primary">DMRT3</name>
</gene>
<evidence type="ECO:0000250" key="1">
    <source>
        <dbReference type="UniProtKB" id="Q9NQL9"/>
    </source>
</evidence>
<evidence type="ECO:0000255" key="2"/>
<evidence type="ECO:0000255" key="3">
    <source>
        <dbReference type="PROSITE-ProRule" id="PRU00070"/>
    </source>
</evidence>
<evidence type="ECO:0000256" key="4">
    <source>
        <dbReference type="SAM" id="MobiDB-lite"/>
    </source>
</evidence>
<evidence type="ECO:0000269" key="5">
    <source>
    </source>
</evidence>
<evidence type="ECO:0000305" key="6"/>
<keyword id="KW-0217">Developmental protein</keyword>
<keyword id="KW-0221">Differentiation</keyword>
<keyword id="KW-0238">DNA-binding</keyword>
<keyword id="KW-0479">Metal-binding</keyword>
<keyword id="KW-0539">Nucleus</keyword>
<keyword id="KW-1185">Reference proteome</keyword>
<keyword id="KW-0726">Sexual differentiation</keyword>
<keyword id="KW-0804">Transcription</keyword>
<keyword id="KW-0805">Transcription regulation</keyword>
<keyword id="KW-0862">Zinc</keyword>
<comment type="function">
    <text evidence="5">Probable transcription factor that plays a role in configuring the spinal circuits controlling stride in vertebrates. Involved in neuronal specification within a specific subdivision of spinal cord neurons and in the development of a coordinated locomotor network controlling limb movements. May regulate transcription during sexual development.</text>
</comment>
<comment type="subcellular location">
    <subcellularLocation>
        <location evidence="3">Nucleus</location>
    </subcellularLocation>
</comment>
<comment type="tissue specificity">
    <text evidence="5">Expressed in the spinal cord, in a small population of neurons located in the ventral horn and around the central canal.</text>
</comment>
<comment type="domain">
    <text evidence="1">DMA domain interacts with ubiquitin.</text>
</comment>
<comment type="polymorphism">
    <text>This sequence corresponds to the wild-type form. A truncated allele, allele A (AC J7FCF0), is linked to the ability to perform alternate gaits, which can be either pace or four-beat ambling gaits. The allele A sequence (AC J7FCF0) has a favorable effect on harness racing performance and on the diversification of the domestic horse, as the altered gait characteristics of a number of breeds apparently require this mutation. Homozygosity for the mutation is required, but not sufficient for pacing, as many Standardbred trotters and some Icelandic horses that are homozygous for this mutation do not pace. The allele A is not found in the following horse populations: Arabian horse, Gotland pony, North-Swedish draft horse, Przewalski's horse, Shetland pony, Swedish ardennes, Swedish warmblood and Thoroughbred.</text>
</comment>
<comment type="miscellaneous">
    <text>DMRT3 is a marker for a subset of spinal cord neurons (dI6).</text>
</comment>
<comment type="similarity">
    <text evidence="6">Belongs to the DMRT family.</text>
</comment>
<comment type="online information" name="Protein Spotlight">
    <link uri="https://www.proteinspotlight.org/back_issues/154/"/>
    <text>A gait on the wildside - Issue 154 of November 2013</text>
</comment>
<proteinExistence type="evidence at transcript level"/>